<evidence type="ECO:0000255" key="1">
    <source>
        <dbReference type="HAMAP-Rule" id="MF_00740"/>
    </source>
</evidence>
<feature type="chain" id="PRO_1000148246" description="Phosphopentomutase">
    <location>
        <begin position="1"/>
        <end position="405"/>
    </location>
</feature>
<feature type="binding site" evidence="1">
    <location>
        <position position="10"/>
    </location>
    <ligand>
        <name>Mn(2+)</name>
        <dbReference type="ChEBI" id="CHEBI:29035"/>
        <label>1</label>
    </ligand>
</feature>
<feature type="binding site" evidence="1">
    <location>
        <position position="305"/>
    </location>
    <ligand>
        <name>Mn(2+)</name>
        <dbReference type="ChEBI" id="CHEBI:29035"/>
        <label>2</label>
    </ligand>
</feature>
<feature type="binding site" evidence="1">
    <location>
        <position position="310"/>
    </location>
    <ligand>
        <name>Mn(2+)</name>
        <dbReference type="ChEBI" id="CHEBI:29035"/>
        <label>2</label>
    </ligand>
</feature>
<feature type="binding site" evidence="1">
    <location>
        <position position="346"/>
    </location>
    <ligand>
        <name>Mn(2+)</name>
        <dbReference type="ChEBI" id="CHEBI:29035"/>
        <label>1</label>
    </ligand>
</feature>
<feature type="binding site" evidence="1">
    <location>
        <position position="347"/>
    </location>
    <ligand>
        <name>Mn(2+)</name>
        <dbReference type="ChEBI" id="CHEBI:29035"/>
        <label>1</label>
    </ligand>
</feature>
<feature type="binding site" evidence="1">
    <location>
        <position position="358"/>
    </location>
    <ligand>
        <name>Mn(2+)</name>
        <dbReference type="ChEBI" id="CHEBI:29035"/>
        <label>2</label>
    </ligand>
</feature>
<name>DEOB_METC4</name>
<protein>
    <recommendedName>
        <fullName evidence="1">Phosphopentomutase</fullName>
        <ecNumber evidence="1">5.4.2.7</ecNumber>
    </recommendedName>
    <alternativeName>
        <fullName evidence="1">Phosphodeoxyribomutase</fullName>
    </alternativeName>
</protein>
<dbReference type="EC" id="5.4.2.7" evidence="1"/>
<dbReference type="EMBL" id="CP001298">
    <property type="protein sequence ID" value="ACK83057.1"/>
    <property type="molecule type" value="Genomic_DNA"/>
</dbReference>
<dbReference type="RefSeq" id="WP_015950731.1">
    <property type="nucleotide sequence ID" value="NC_011757.1"/>
</dbReference>
<dbReference type="SMR" id="B7KXI3"/>
<dbReference type="KEGG" id="mch:Mchl_2210"/>
<dbReference type="HOGENOM" id="CLU_053861_0_0_5"/>
<dbReference type="UniPathway" id="UPA00002">
    <property type="reaction ID" value="UER00467"/>
</dbReference>
<dbReference type="Proteomes" id="UP000002385">
    <property type="component" value="Chromosome"/>
</dbReference>
<dbReference type="GO" id="GO:0005829">
    <property type="term" value="C:cytosol"/>
    <property type="evidence" value="ECO:0007669"/>
    <property type="project" value="TreeGrafter"/>
</dbReference>
<dbReference type="GO" id="GO:0000287">
    <property type="term" value="F:magnesium ion binding"/>
    <property type="evidence" value="ECO:0007669"/>
    <property type="project" value="InterPro"/>
</dbReference>
<dbReference type="GO" id="GO:0030145">
    <property type="term" value="F:manganese ion binding"/>
    <property type="evidence" value="ECO:0007669"/>
    <property type="project" value="UniProtKB-UniRule"/>
</dbReference>
<dbReference type="GO" id="GO:0008973">
    <property type="term" value="F:phosphopentomutase activity"/>
    <property type="evidence" value="ECO:0007669"/>
    <property type="project" value="UniProtKB-UniRule"/>
</dbReference>
<dbReference type="GO" id="GO:0006018">
    <property type="term" value="P:2-deoxyribose 1-phosphate catabolic process"/>
    <property type="evidence" value="ECO:0007669"/>
    <property type="project" value="UniProtKB-UniRule"/>
</dbReference>
<dbReference type="GO" id="GO:0006015">
    <property type="term" value="P:5-phosphoribose 1-diphosphate biosynthetic process"/>
    <property type="evidence" value="ECO:0007669"/>
    <property type="project" value="UniProtKB-UniPathway"/>
</dbReference>
<dbReference type="GO" id="GO:0043094">
    <property type="term" value="P:metabolic compound salvage"/>
    <property type="evidence" value="ECO:0007669"/>
    <property type="project" value="InterPro"/>
</dbReference>
<dbReference type="GO" id="GO:0009117">
    <property type="term" value="P:nucleotide metabolic process"/>
    <property type="evidence" value="ECO:0007669"/>
    <property type="project" value="InterPro"/>
</dbReference>
<dbReference type="CDD" id="cd16009">
    <property type="entry name" value="PPM"/>
    <property type="match status" value="1"/>
</dbReference>
<dbReference type="FunFam" id="3.30.70.1250:FF:000001">
    <property type="entry name" value="Phosphopentomutase"/>
    <property type="match status" value="1"/>
</dbReference>
<dbReference type="Gene3D" id="3.40.720.10">
    <property type="entry name" value="Alkaline Phosphatase, subunit A"/>
    <property type="match status" value="1"/>
</dbReference>
<dbReference type="Gene3D" id="3.30.70.1250">
    <property type="entry name" value="Phosphopentomutase"/>
    <property type="match status" value="1"/>
</dbReference>
<dbReference type="HAMAP" id="MF_00740">
    <property type="entry name" value="Phosphopentomut"/>
    <property type="match status" value="1"/>
</dbReference>
<dbReference type="InterPro" id="IPR017850">
    <property type="entry name" value="Alkaline_phosphatase_core_sf"/>
</dbReference>
<dbReference type="InterPro" id="IPR010045">
    <property type="entry name" value="DeoB"/>
</dbReference>
<dbReference type="InterPro" id="IPR006124">
    <property type="entry name" value="Metalloenzyme"/>
</dbReference>
<dbReference type="InterPro" id="IPR024052">
    <property type="entry name" value="Phosphopentomutase_DeoB_cap_sf"/>
</dbReference>
<dbReference type="NCBIfam" id="TIGR01696">
    <property type="entry name" value="deoB"/>
    <property type="match status" value="1"/>
</dbReference>
<dbReference type="NCBIfam" id="NF003766">
    <property type="entry name" value="PRK05362.1"/>
    <property type="match status" value="1"/>
</dbReference>
<dbReference type="PANTHER" id="PTHR21110">
    <property type="entry name" value="PHOSPHOPENTOMUTASE"/>
    <property type="match status" value="1"/>
</dbReference>
<dbReference type="PANTHER" id="PTHR21110:SF0">
    <property type="entry name" value="PHOSPHOPENTOMUTASE"/>
    <property type="match status" value="1"/>
</dbReference>
<dbReference type="Pfam" id="PF01676">
    <property type="entry name" value="Metalloenzyme"/>
    <property type="match status" value="1"/>
</dbReference>
<dbReference type="PIRSF" id="PIRSF001491">
    <property type="entry name" value="Ppentomutase"/>
    <property type="match status" value="1"/>
</dbReference>
<dbReference type="SUPFAM" id="SSF53649">
    <property type="entry name" value="Alkaline phosphatase-like"/>
    <property type="match status" value="1"/>
</dbReference>
<dbReference type="SUPFAM" id="SSF143856">
    <property type="entry name" value="DeoB insert domain-like"/>
    <property type="match status" value="1"/>
</dbReference>
<gene>
    <name evidence="1" type="primary">deoB</name>
    <name type="ordered locus">Mchl_2210</name>
</gene>
<accession>B7KXI3</accession>
<sequence length="405" mass="42083">MARALLIVLDSVGIGGAPDADRYGDAGSDTVGHIAEACAAGRGDRPGLRAGPLRMPNLTALGLGLACEGATGRVPPGLAPDGPVRALWGHAVETAAGKDTPSGHWEIAGVPVREAWGHFPDTQPAFPAELTAALIERAGLPGILGDCHASGTAIIEALGAEHVRTGKPICYTSADSVFQIAAHEEAFGLERLYETCRIAREVCDPYRVGRVIARPFLGSAAEGFRRTSHRKDFSVAPPAGTLLDGLEAAGRAVVSVGKIGDIFAHRATGREIKPAGNAACLDAALDAFAGLPEGGFVFLNLVDFDTEHGHRRDVPGYAAELEAFDARLPEIQAVLKPGDLCVITADHGNDPTWTGTEHTREQVPVLAFGPGLTPRALGRRESFADMGASVAAHLGLPPLGAGQAW</sequence>
<comment type="function">
    <text evidence="1">Isomerase that catalyzes the conversion of deoxy-ribose 1-phosphate (dRib-1-P) and ribose 1-phosphate (Rib-1-P) to deoxy-ribose 5-phosphate (dRib-5-P) and ribose 5-phosphate (Rib-5-P), respectively.</text>
</comment>
<comment type="catalytic activity">
    <reaction evidence="1">
        <text>2-deoxy-alpha-D-ribose 1-phosphate = 2-deoxy-D-ribose 5-phosphate</text>
        <dbReference type="Rhea" id="RHEA:27658"/>
        <dbReference type="ChEBI" id="CHEBI:57259"/>
        <dbReference type="ChEBI" id="CHEBI:62877"/>
        <dbReference type="EC" id="5.4.2.7"/>
    </reaction>
</comment>
<comment type="catalytic activity">
    <reaction evidence="1">
        <text>alpha-D-ribose 1-phosphate = D-ribose 5-phosphate</text>
        <dbReference type="Rhea" id="RHEA:18793"/>
        <dbReference type="ChEBI" id="CHEBI:57720"/>
        <dbReference type="ChEBI" id="CHEBI:78346"/>
        <dbReference type="EC" id="5.4.2.7"/>
    </reaction>
</comment>
<comment type="cofactor">
    <cofactor evidence="1">
        <name>Mn(2+)</name>
        <dbReference type="ChEBI" id="CHEBI:29035"/>
    </cofactor>
    <text evidence="1">Binds 2 manganese ions.</text>
</comment>
<comment type="pathway">
    <text evidence="1">Carbohydrate degradation; 2-deoxy-D-ribose 1-phosphate degradation; D-glyceraldehyde 3-phosphate and acetaldehyde from 2-deoxy-alpha-D-ribose 1-phosphate: step 1/2.</text>
</comment>
<comment type="subcellular location">
    <subcellularLocation>
        <location evidence="1">Cytoplasm</location>
    </subcellularLocation>
</comment>
<comment type="similarity">
    <text evidence="1">Belongs to the phosphopentomutase family.</text>
</comment>
<reference key="1">
    <citation type="submission" date="2008-12" db="EMBL/GenBank/DDBJ databases">
        <title>Complete sequence of chromosome of Methylobacterium chloromethanicum CM4.</title>
        <authorList>
            <consortium name="US DOE Joint Genome Institute"/>
            <person name="Lucas S."/>
            <person name="Copeland A."/>
            <person name="Lapidus A."/>
            <person name="Glavina del Rio T."/>
            <person name="Dalin E."/>
            <person name="Tice H."/>
            <person name="Bruce D."/>
            <person name="Goodwin L."/>
            <person name="Pitluck S."/>
            <person name="Chertkov O."/>
            <person name="Brettin T."/>
            <person name="Detter J.C."/>
            <person name="Han C."/>
            <person name="Larimer F."/>
            <person name="Land M."/>
            <person name="Hauser L."/>
            <person name="Kyrpides N."/>
            <person name="Mikhailova N."/>
            <person name="Marx C."/>
            <person name="Richardson P."/>
        </authorList>
    </citation>
    <scope>NUCLEOTIDE SEQUENCE [LARGE SCALE GENOMIC DNA]</scope>
    <source>
        <strain>CM4 / NCIMB 13688</strain>
    </source>
</reference>
<keyword id="KW-0963">Cytoplasm</keyword>
<keyword id="KW-0413">Isomerase</keyword>
<keyword id="KW-0464">Manganese</keyword>
<keyword id="KW-0479">Metal-binding</keyword>
<organism>
    <name type="scientific">Methylorubrum extorquens (strain CM4 / NCIMB 13688)</name>
    <name type="common">Methylobacterium extorquens</name>
    <dbReference type="NCBI Taxonomy" id="440085"/>
    <lineage>
        <taxon>Bacteria</taxon>
        <taxon>Pseudomonadati</taxon>
        <taxon>Pseudomonadota</taxon>
        <taxon>Alphaproteobacteria</taxon>
        <taxon>Hyphomicrobiales</taxon>
        <taxon>Methylobacteriaceae</taxon>
        <taxon>Methylorubrum</taxon>
    </lineage>
</organism>
<proteinExistence type="inferred from homology"/>